<keyword id="KW-0414">Isoprene biosynthesis</keyword>
<keyword id="KW-0464">Manganese</keyword>
<keyword id="KW-0479">Metal-binding</keyword>
<keyword id="KW-0521">NADP</keyword>
<keyword id="KW-0560">Oxidoreductase</keyword>
<keyword id="KW-1185">Reference proteome</keyword>
<name>DXR_PSEPK</name>
<sequence>MGCDVSRPQRITVLGATGSIGLSTLDVIARHPDRYQAFALTGYSRIDELLALCVRHRPAFAVVPSTEAAVRLRASLAAAGCTTEVLEGEAGLCQVASAAEVDAVMAAIVGAAGLRPTLAAVEAGKKVLLANKEALVMSGALFMEAVRQKGAVLLPIDSEHNAIFQCMPGDYARGLSAVGVRRILLTASGGPFRETPVEALLDVTPEQACAHPNWSMGRKISVDSASMMNKGLELIEACWLFDAVPSKVEVVVHPQSVIHSLVDYVDGSVLAQLGNPDMRTPIANALAWPERIDSGVAPLDLFAIARLDFQAPDEQRFPCLRLARQAAEAGNSAPAVLNAANEVAVQAFLERRIRFPEIAGMIEQVLDQEPVVPLPSLDAVFAADQRARELSREWLRRHGR</sequence>
<feature type="chain" id="PRO_0000163698" description="1-deoxy-D-xylulose 5-phosphate reductoisomerase">
    <location>
        <begin position="1"/>
        <end position="400"/>
    </location>
</feature>
<feature type="binding site" evidence="1">
    <location>
        <position position="17"/>
    </location>
    <ligand>
        <name>NADPH</name>
        <dbReference type="ChEBI" id="CHEBI:57783"/>
    </ligand>
</feature>
<feature type="binding site" evidence="1">
    <location>
        <position position="18"/>
    </location>
    <ligand>
        <name>NADPH</name>
        <dbReference type="ChEBI" id="CHEBI:57783"/>
    </ligand>
</feature>
<feature type="binding site" evidence="1">
    <location>
        <position position="19"/>
    </location>
    <ligand>
        <name>NADPH</name>
        <dbReference type="ChEBI" id="CHEBI:57783"/>
    </ligand>
</feature>
<feature type="binding site" evidence="1">
    <location>
        <position position="20"/>
    </location>
    <ligand>
        <name>NADPH</name>
        <dbReference type="ChEBI" id="CHEBI:57783"/>
    </ligand>
</feature>
<feature type="binding site" evidence="1">
    <location>
        <position position="131"/>
    </location>
    <ligand>
        <name>NADPH</name>
        <dbReference type="ChEBI" id="CHEBI:57783"/>
    </ligand>
</feature>
<feature type="binding site" evidence="1">
    <location>
        <position position="132"/>
    </location>
    <ligand>
        <name>1-deoxy-D-xylulose 5-phosphate</name>
        <dbReference type="ChEBI" id="CHEBI:57792"/>
    </ligand>
</feature>
<feature type="binding site" evidence="1">
    <location>
        <position position="133"/>
    </location>
    <ligand>
        <name>NADPH</name>
        <dbReference type="ChEBI" id="CHEBI:57783"/>
    </ligand>
</feature>
<feature type="binding site" evidence="1">
    <location>
        <position position="157"/>
    </location>
    <ligand>
        <name>Mn(2+)</name>
        <dbReference type="ChEBI" id="CHEBI:29035"/>
    </ligand>
</feature>
<feature type="binding site" evidence="1">
    <location>
        <position position="158"/>
    </location>
    <ligand>
        <name>1-deoxy-D-xylulose 5-phosphate</name>
        <dbReference type="ChEBI" id="CHEBI:57792"/>
    </ligand>
</feature>
<feature type="binding site" evidence="1">
    <location>
        <position position="159"/>
    </location>
    <ligand>
        <name>1-deoxy-D-xylulose 5-phosphate</name>
        <dbReference type="ChEBI" id="CHEBI:57792"/>
    </ligand>
</feature>
<feature type="binding site" evidence="1">
    <location>
        <position position="159"/>
    </location>
    <ligand>
        <name>Mn(2+)</name>
        <dbReference type="ChEBI" id="CHEBI:29035"/>
    </ligand>
</feature>
<feature type="binding site" evidence="1">
    <location>
        <position position="188"/>
    </location>
    <ligand>
        <name>1-deoxy-D-xylulose 5-phosphate</name>
        <dbReference type="ChEBI" id="CHEBI:57792"/>
    </ligand>
</feature>
<feature type="binding site" evidence="1">
    <location>
        <position position="211"/>
    </location>
    <ligand>
        <name>1-deoxy-D-xylulose 5-phosphate</name>
        <dbReference type="ChEBI" id="CHEBI:57792"/>
    </ligand>
</feature>
<feature type="binding site" evidence="1">
    <location>
        <position position="217"/>
    </location>
    <ligand>
        <name>NADPH</name>
        <dbReference type="ChEBI" id="CHEBI:57783"/>
    </ligand>
</feature>
<feature type="binding site" evidence="1">
    <location>
        <position position="224"/>
    </location>
    <ligand>
        <name>1-deoxy-D-xylulose 5-phosphate</name>
        <dbReference type="ChEBI" id="CHEBI:57792"/>
    </ligand>
</feature>
<feature type="binding site" evidence="1">
    <location>
        <position position="229"/>
    </location>
    <ligand>
        <name>1-deoxy-D-xylulose 5-phosphate</name>
        <dbReference type="ChEBI" id="CHEBI:57792"/>
    </ligand>
</feature>
<feature type="binding site" evidence="1">
    <location>
        <position position="230"/>
    </location>
    <ligand>
        <name>1-deoxy-D-xylulose 5-phosphate</name>
        <dbReference type="ChEBI" id="CHEBI:57792"/>
    </ligand>
</feature>
<feature type="binding site" evidence="1">
    <location>
        <position position="233"/>
    </location>
    <ligand>
        <name>1-deoxy-D-xylulose 5-phosphate</name>
        <dbReference type="ChEBI" id="CHEBI:57792"/>
    </ligand>
</feature>
<feature type="binding site" evidence="1">
    <location>
        <position position="233"/>
    </location>
    <ligand>
        <name>Mn(2+)</name>
        <dbReference type="ChEBI" id="CHEBI:29035"/>
    </ligand>
</feature>
<organism>
    <name type="scientific">Pseudomonas putida (strain ATCC 47054 / DSM 6125 / CFBP 8728 / NCIMB 11950 / KT2440)</name>
    <dbReference type="NCBI Taxonomy" id="160488"/>
    <lineage>
        <taxon>Bacteria</taxon>
        <taxon>Pseudomonadati</taxon>
        <taxon>Pseudomonadota</taxon>
        <taxon>Gammaproteobacteria</taxon>
        <taxon>Pseudomonadales</taxon>
        <taxon>Pseudomonadaceae</taxon>
        <taxon>Pseudomonas</taxon>
    </lineage>
</organism>
<proteinExistence type="inferred from homology"/>
<protein>
    <recommendedName>
        <fullName evidence="1">1-deoxy-D-xylulose 5-phosphate reductoisomerase</fullName>
        <shortName evidence="1">DXP reductoisomerase</shortName>
        <ecNumber evidence="1">1.1.1.267</ecNumber>
    </recommendedName>
    <alternativeName>
        <fullName evidence="1">1-deoxyxylulose-5-phosphate reductoisomerase</fullName>
    </alternativeName>
    <alternativeName>
        <fullName evidence="1">2-C-methyl-D-erythritol 4-phosphate synthase</fullName>
    </alternativeName>
</protein>
<evidence type="ECO:0000255" key="1">
    <source>
        <dbReference type="HAMAP-Rule" id="MF_00183"/>
    </source>
</evidence>
<evidence type="ECO:0000305" key="2"/>
<gene>
    <name evidence="1" type="primary">dxr</name>
    <name type="ordered locus">PP_1597</name>
</gene>
<comment type="function">
    <text evidence="1">Catalyzes the NADPH-dependent rearrangement and reduction of 1-deoxy-D-xylulose-5-phosphate (DXP) to 2-C-methyl-D-erythritol 4-phosphate (MEP).</text>
</comment>
<comment type="catalytic activity">
    <reaction evidence="1">
        <text>2-C-methyl-D-erythritol 4-phosphate + NADP(+) = 1-deoxy-D-xylulose 5-phosphate + NADPH + H(+)</text>
        <dbReference type="Rhea" id="RHEA:13717"/>
        <dbReference type="ChEBI" id="CHEBI:15378"/>
        <dbReference type="ChEBI" id="CHEBI:57783"/>
        <dbReference type="ChEBI" id="CHEBI:57792"/>
        <dbReference type="ChEBI" id="CHEBI:58262"/>
        <dbReference type="ChEBI" id="CHEBI:58349"/>
        <dbReference type="EC" id="1.1.1.267"/>
    </reaction>
    <physiologicalReaction direction="right-to-left" evidence="1">
        <dbReference type="Rhea" id="RHEA:13719"/>
    </physiologicalReaction>
</comment>
<comment type="cofactor">
    <cofactor evidence="1">
        <name>Mg(2+)</name>
        <dbReference type="ChEBI" id="CHEBI:18420"/>
    </cofactor>
    <cofactor evidence="1">
        <name>Mn(2+)</name>
        <dbReference type="ChEBI" id="CHEBI:29035"/>
    </cofactor>
</comment>
<comment type="pathway">
    <text evidence="1">Isoprenoid biosynthesis; isopentenyl diphosphate biosynthesis via DXP pathway; isopentenyl diphosphate from 1-deoxy-D-xylulose 5-phosphate: step 1/6.</text>
</comment>
<comment type="similarity">
    <text evidence="1">Belongs to the DXR family.</text>
</comment>
<comment type="sequence caution" evidence="2">
    <conflict type="erroneous initiation">
        <sequence resource="EMBL-CDS" id="AAN67218"/>
    </conflict>
</comment>
<dbReference type="EC" id="1.1.1.267" evidence="1"/>
<dbReference type="EMBL" id="AE015451">
    <property type="protein sequence ID" value="AAN67218.1"/>
    <property type="status" value="ALT_INIT"/>
    <property type="molecule type" value="Genomic_DNA"/>
</dbReference>
<dbReference type="RefSeq" id="NP_743754.1">
    <property type="nucleotide sequence ID" value="NC_002947.4"/>
</dbReference>
<dbReference type="SMR" id="Q88MH4"/>
<dbReference type="STRING" id="160488.PP_1597"/>
<dbReference type="PaxDb" id="160488-PP_1597"/>
<dbReference type="KEGG" id="ppu:PP_1597"/>
<dbReference type="PATRIC" id="fig|160488.4.peg.1688"/>
<dbReference type="eggNOG" id="COG0743">
    <property type="taxonomic scope" value="Bacteria"/>
</dbReference>
<dbReference type="HOGENOM" id="CLU_035714_4_0_6"/>
<dbReference type="OrthoDB" id="9806546at2"/>
<dbReference type="PhylomeDB" id="Q88MH4"/>
<dbReference type="UniPathway" id="UPA00056">
    <property type="reaction ID" value="UER00092"/>
</dbReference>
<dbReference type="Proteomes" id="UP000000556">
    <property type="component" value="Chromosome"/>
</dbReference>
<dbReference type="GO" id="GO:0030604">
    <property type="term" value="F:1-deoxy-D-xylulose-5-phosphate reductoisomerase activity"/>
    <property type="evidence" value="ECO:0007669"/>
    <property type="project" value="UniProtKB-UniRule"/>
</dbReference>
<dbReference type="GO" id="GO:0030145">
    <property type="term" value="F:manganese ion binding"/>
    <property type="evidence" value="ECO:0007669"/>
    <property type="project" value="TreeGrafter"/>
</dbReference>
<dbReference type="GO" id="GO:0070402">
    <property type="term" value="F:NADPH binding"/>
    <property type="evidence" value="ECO:0007669"/>
    <property type="project" value="InterPro"/>
</dbReference>
<dbReference type="GO" id="GO:0051484">
    <property type="term" value="P:isopentenyl diphosphate biosynthetic process, methylerythritol 4-phosphate pathway involved in terpenoid biosynthetic process"/>
    <property type="evidence" value="ECO:0007669"/>
    <property type="project" value="TreeGrafter"/>
</dbReference>
<dbReference type="FunFam" id="1.10.1740.10:FF:000004">
    <property type="entry name" value="1-deoxy-D-xylulose 5-phosphate reductoisomerase"/>
    <property type="match status" value="1"/>
</dbReference>
<dbReference type="FunFam" id="3.40.50.720:FF:000045">
    <property type="entry name" value="1-deoxy-D-xylulose 5-phosphate reductoisomerase"/>
    <property type="match status" value="1"/>
</dbReference>
<dbReference type="Gene3D" id="1.10.1740.10">
    <property type="match status" value="1"/>
</dbReference>
<dbReference type="Gene3D" id="3.40.50.720">
    <property type="entry name" value="NAD(P)-binding Rossmann-like Domain"/>
    <property type="match status" value="1"/>
</dbReference>
<dbReference type="HAMAP" id="MF_00183">
    <property type="entry name" value="DXP_reductoisom"/>
    <property type="match status" value="1"/>
</dbReference>
<dbReference type="InterPro" id="IPR003821">
    <property type="entry name" value="DXP_reductoisomerase"/>
</dbReference>
<dbReference type="InterPro" id="IPR013644">
    <property type="entry name" value="DXP_reductoisomerase_C"/>
</dbReference>
<dbReference type="InterPro" id="IPR013512">
    <property type="entry name" value="DXP_reductoisomerase_N"/>
</dbReference>
<dbReference type="InterPro" id="IPR026877">
    <property type="entry name" value="DXPR_C"/>
</dbReference>
<dbReference type="InterPro" id="IPR036169">
    <property type="entry name" value="DXPR_C_sf"/>
</dbReference>
<dbReference type="InterPro" id="IPR036291">
    <property type="entry name" value="NAD(P)-bd_dom_sf"/>
</dbReference>
<dbReference type="NCBIfam" id="TIGR00243">
    <property type="entry name" value="Dxr"/>
    <property type="match status" value="1"/>
</dbReference>
<dbReference type="NCBIfam" id="NF003938">
    <property type="entry name" value="PRK05447.1-1"/>
    <property type="match status" value="1"/>
</dbReference>
<dbReference type="NCBIfam" id="NF009114">
    <property type="entry name" value="PRK12464.1"/>
    <property type="match status" value="1"/>
</dbReference>
<dbReference type="PANTHER" id="PTHR30525">
    <property type="entry name" value="1-DEOXY-D-XYLULOSE 5-PHOSPHATE REDUCTOISOMERASE"/>
    <property type="match status" value="1"/>
</dbReference>
<dbReference type="PANTHER" id="PTHR30525:SF0">
    <property type="entry name" value="1-DEOXY-D-XYLULOSE 5-PHOSPHATE REDUCTOISOMERASE, CHLOROPLASTIC"/>
    <property type="match status" value="1"/>
</dbReference>
<dbReference type="Pfam" id="PF08436">
    <property type="entry name" value="DXP_redisom_C"/>
    <property type="match status" value="1"/>
</dbReference>
<dbReference type="Pfam" id="PF02670">
    <property type="entry name" value="DXP_reductoisom"/>
    <property type="match status" value="1"/>
</dbReference>
<dbReference type="Pfam" id="PF13288">
    <property type="entry name" value="DXPR_C"/>
    <property type="match status" value="1"/>
</dbReference>
<dbReference type="PIRSF" id="PIRSF006205">
    <property type="entry name" value="Dxp_reductismrs"/>
    <property type="match status" value="1"/>
</dbReference>
<dbReference type="SUPFAM" id="SSF69055">
    <property type="entry name" value="1-deoxy-D-xylulose-5-phosphate reductoisomerase, C-terminal domain"/>
    <property type="match status" value="1"/>
</dbReference>
<dbReference type="SUPFAM" id="SSF55347">
    <property type="entry name" value="Glyceraldehyde-3-phosphate dehydrogenase-like, C-terminal domain"/>
    <property type="match status" value="1"/>
</dbReference>
<dbReference type="SUPFAM" id="SSF51735">
    <property type="entry name" value="NAD(P)-binding Rossmann-fold domains"/>
    <property type="match status" value="1"/>
</dbReference>
<accession>Q88MH4</accession>
<reference key="1">
    <citation type="journal article" date="2002" name="Environ. Microbiol.">
        <title>Complete genome sequence and comparative analysis of the metabolically versatile Pseudomonas putida KT2440.</title>
        <authorList>
            <person name="Nelson K.E."/>
            <person name="Weinel C."/>
            <person name="Paulsen I.T."/>
            <person name="Dodson R.J."/>
            <person name="Hilbert H."/>
            <person name="Martins dos Santos V.A.P."/>
            <person name="Fouts D.E."/>
            <person name="Gill S.R."/>
            <person name="Pop M."/>
            <person name="Holmes M."/>
            <person name="Brinkac L.M."/>
            <person name="Beanan M.J."/>
            <person name="DeBoy R.T."/>
            <person name="Daugherty S.C."/>
            <person name="Kolonay J.F."/>
            <person name="Madupu R."/>
            <person name="Nelson W.C."/>
            <person name="White O."/>
            <person name="Peterson J.D."/>
            <person name="Khouri H.M."/>
            <person name="Hance I."/>
            <person name="Chris Lee P."/>
            <person name="Holtzapple E.K."/>
            <person name="Scanlan D."/>
            <person name="Tran K."/>
            <person name="Moazzez A."/>
            <person name="Utterback T.R."/>
            <person name="Rizzo M."/>
            <person name="Lee K."/>
            <person name="Kosack D."/>
            <person name="Moestl D."/>
            <person name="Wedler H."/>
            <person name="Lauber J."/>
            <person name="Stjepandic D."/>
            <person name="Hoheisel J."/>
            <person name="Straetz M."/>
            <person name="Heim S."/>
            <person name="Kiewitz C."/>
            <person name="Eisen J.A."/>
            <person name="Timmis K.N."/>
            <person name="Duesterhoeft A."/>
            <person name="Tuemmler B."/>
            <person name="Fraser C.M."/>
        </authorList>
    </citation>
    <scope>NUCLEOTIDE SEQUENCE [LARGE SCALE GENOMIC DNA]</scope>
    <source>
        <strain>ATCC 47054 / DSM 6125 / CFBP 8728 / NCIMB 11950 / KT2440</strain>
    </source>
</reference>